<organism>
    <name type="scientific">Vibrio atlanticus (strain LGP32)</name>
    <name type="common">Vibrio splendidus (strain Mel32)</name>
    <dbReference type="NCBI Taxonomy" id="575788"/>
    <lineage>
        <taxon>Bacteria</taxon>
        <taxon>Pseudomonadati</taxon>
        <taxon>Pseudomonadota</taxon>
        <taxon>Gammaproteobacteria</taxon>
        <taxon>Vibrionales</taxon>
        <taxon>Vibrionaceae</taxon>
        <taxon>Vibrio</taxon>
    </lineage>
</organism>
<gene>
    <name evidence="1" type="primary">rnfB</name>
    <name type="ordered locus">VS_0977</name>
</gene>
<protein>
    <recommendedName>
        <fullName evidence="1">Ion-translocating oxidoreductase complex subunit B</fullName>
        <ecNumber evidence="1">7.-.-.-</ecNumber>
    </recommendedName>
    <alternativeName>
        <fullName evidence="1">Rnf electron transport complex subunit B</fullName>
    </alternativeName>
</protein>
<reference key="1">
    <citation type="submission" date="2009-02" db="EMBL/GenBank/DDBJ databases">
        <title>Vibrio splendidus str. LGP32 complete genome.</title>
        <authorList>
            <person name="Mazel D."/>
            <person name="Le Roux F."/>
        </authorList>
    </citation>
    <scope>NUCLEOTIDE SEQUENCE [LARGE SCALE GENOMIC DNA]</scope>
    <source>
        <strain>LGP32</strain>
    </source>
</reference>
<dbReference type="EC" id="7.-.-.-" evidence="1"/>
<dbReference type="EMBL" id="FM954972">
    <property type="protein sequence ID" value="CAV18005.1"/>
    <property type="molecule type" value="Genomic_DNA"/>
</dbReference>
<dbReference type="STRING" id="575788.VS_0977"/>
<dbReference type="KEGG" id="vsp:VS_0977"/>
<dbReference type="eggNOG" id="COG2878">
    <property type="taxonomic scope" value="Bacteria"/>
</dbReference>
<dbReference type="HOGENOM" id="CLU_063448_2_0_6"/>
<dbReference type="Proteomes" id="UP000009100">
    <property type="component" value="Chromosome 1"/>
</dbReference>
<dbReference type="GO" id="GO:0005886">
    <property type="term" value="C:plasma membrane"/>
    <property type="evidence" value="ECO:0007669"/>
    <property type="project" value="UniProtKB-SubCell"/>
</dbReference>
<dbReference type="GO" id="GO:0051539">
    <property type="term" value="F:4 iron, 4 sulfur cluster binding"/>
    <property type="evidence" value="ECO:0007669"/>
    <property type="project" value="UniProtKB-UniRule"/>
</dbReference>
<dbReference type="GO" id="GO:0009055">
    <property type="term" value="F:electron transfer activity"/>
    <property type="evidence" value="ECO:0007669"/>
    <property type="project" value="InterPro"/>
</dbReference>
<dbReference type="GO" id="GO:0046872">
    <property type="term" value="F:metal ion binding"/>
    <property type="evidence" value="ECO:0007669"/>
    <property type="project" value="UniProtKB-KW"/>
</dbReference>
<dbReference type="GO" id="GO:0022900">
    <property type="term" value="P:electron transport chain"/>
    <property type="evidence" value="ECO:0007669"/>
    <property type="project" value="UniProtKB-UniRule"/>
</dbReference>
<dbReference type="FunFam" id="1.10.15.40:FF:000001">
    <property type="entry name" value="Ion-translocating oxidoreductase complex subunit B"/>
    <property type="match status" value="1"/>
</dbReference>
<dbReference type="Gene3D" id="3.30.70.20">
    <property type="match status" value="2"/>
</dbReference>
<dbReference type="Gene3D" id="1.10.15.40">
    <property type="entry name" value="Electron transport complex subunit B, putative Fe-S cluster"/>
    <property type="match status" value="1"/>
</dbReference>
<dbReference type="HAMAP" id="MF_00463">
    <property type="entry name" value="RsxB_RnfB"/>
    <property type="match status" value="1"/>
</dbReference>
<dbReference type="InterPro" id="IPR007202">
    <property type="entry name" value="4Fe-4S_dom"/>
</dbReference>
<dbReference type="InterPro" id="IPR017896">
    <property type="entry name" value="4Fe4S_Fe-S-bd"/>
</dbReference>
<dbReference type="InterPro" id="IPR017900">
    <property type="entry name" value="4Fe4S_Fe_S_CS"/>
</dbReference>
<dbReference type="InterPro" id="IPR010207">
    <property type="entry name" value="Elect_transpt_cplx_RnfB/RsxB"/>
</dbReference>
<dbReference type="InterPro" id="IPR016463">
    <property type="entry name" value="RnfB/RsxB_Proteobac"/>
</dbReference>
<dbReference type="InterPro" id="IPR050294">
    <property type="entry name" value="RnfB_subfamily"/>
</dbReference>
<dbReference type="NCBIfam" id="NF003475">
    <property type="entry name" value="PRK05113.1"/>
    <property type="match status" value="1"/>
</dbReference>
<dbReference type="NCBIfam" id="TIGR01944">
    <property type="entry name" value="rnfB"/>
    <property type="match status" value="1"/>
</dbReference>
<dbReference type="PANTHER" id="PTHR42859:SF3">
    <property type="entry name" value="ION-TRANSLOCATING OXIDOREDUCTASE COMPLEX SUBUNIT B"/>
    <property type="match status" value="1"/>
</dbReference>
<dbReference type="PANTHER" id="PTHR42859">
    <property type="entry name" value="OXIDOREDUCTASE"/>
    <property type="match status" value="1"/>
</dbReference>
<dbReference type="Pfam" id="PF14697">
    <property type="entry name" value="Fer4_21"/>
    <property type="match status" value="1"/>
</dbReference>
<dbReference type="Pfam" id="PF04060">
    <property type="entry name" value="FeS"/>
    <property type="match status" value="1"/>
</dbReference>
<dbReference type="PIRSF" id="PIRSF005784">
    <property type="entry name" value="Elect_transpt_RnfB"/>
    <property type="match status" value="1"/>
</dbReference>
<dbReference type="SUPFAM" id="SSF54862">
    <property type="entry name" value="4Fe-4S ferredoxins"/>
    <property type="match status" value="1"/>
</dbReference>
<dbReference type="PROSITE" id="PS51656">
    <property type="entry name" value="4FE4S"/>
    <property type="match status" value="1"/>
</dbReference>
<dbReference type="PROSITE" id="PS00198">
    <property type="entry name" value="4FE4S_FER_1"/>
    <property type="match status" value="2"/>
</dbReference>
<dbReference type="PROSITE" id="PS51379">
    <property type="entry name" value="4FE4S_FER_2"/>
    <property type="match status" value="2"/>
</dbReference>
<evidence type="ECO:0000255" key="1">
    <source>
        <dbReference type="HAMAP-Rule" id="MF_00463"/>
    </source>
</evidence>
<proteinExistence type="inferred from homology"/>
<name>RNFB_VIBA3</name>
<feature type="chain" id="PRO_1000194504" description="Ion-translocating oxidoreductase complex subunit B">
    <location>
        <begin position="1"/>
        <end position="197"/>
    </location>
</feature>
<feature type="domain" description="4Fe-4S" evidence="1">
    <location>
        <begin position="32"/>
        <end position="90"/>
    </location>
</feature>
<feature type="domain" description="4Fe-4S ferredoxin-type 1" evidence="1">
    <location>
        <begin position="105"/>
        <end position="134"/>
    </location>
</feature>
<feature type="domain" description="4Fe-4S ferredoxin-type 2" evidence="1">
    <location>
        <begin position="135"/>
        <end position="164"/>
    </location>
</feature>
<feature type="region of interest" description="Hydrophobic" evidence="1">
    <location>
        <begin position="1"/>
        <end position="26"/>
    </location>
</feature>
<feature type="binding site" evidence="1">
    <location>
        <position position="49"/>
    </location>
    <ligand>
        <name>[4Fe-4S] cluster</name>
        <dbReference type="ChEBI" id="CHEBI:49883"/>
        <label>1</label>
    </ligand>
</feature>
<feature type="binding site" evidence="1">
    <location>
        <position position="52"/>
    </location>
    <ligand>
        <name>[4Fe-4S] cluster</name>
        <dbReference type="ChEBI" id="CHEBI:49883"/>
        <label>1</label>
    </ligand>
</feature>
<feature type="binding site" evidence="1">
    <location>
        <position position="57"/>
    </location>
    <ligand>
        <name>[4Fe-4S] cluster</name>
        <dbReference type="ChEBI" id="CHEBI:49883"/>
        <label>1</label>
    </ligand>
</feature>
<feature type="binding site" evidence="1">
    <location>
        <position position="73"/>
    </location>
    <ligand>
        <name>[4Fe-4S] cluster</name>
        <dbReference type="ChEBI" id="CHEBI:49883"/>
        <label>1</label>
    </ligand>
</feature>
<feature type="binding site" evidence="1">
    <location>
        <position position="114"/>
    </location>
    <ligand>
        <name>[4Fe-4S] cluster</name>
        <dbReference type="ChEBI" id="CHEBI:49883"/>
        <label>2</label>
    </ligand>
</feature>
<feature type="binding site" evidence="1">
    <location>
        <position position="117"/>
    </location>
    <ligand>
        <name>[4Fe-4S] cluster</name>
        <dbReference type="ChEBI" id="CHEBI:49883"/>
        <label>2</label>
    </ligand>
</feature>
<feature type="binding site" evidence="1">
    <location>
        <position position="120"/>
    </location>
    <ligand>
        <name>[4Fe-4S] cluster</name>
        <dbReference type="ChEBI" id="CHEBI:49883"/>
        <label>2</label>
    </ligand>
</feature>
<feature type="binding site" evidence="1">
    <location>
        <position position="124"/>
    </location>
    <ligand>
        <name>[4Fe-4S] cluster</name>
        <dbReference type="ChEBI" id="CHEBI:49883"/>
        <label>3</label>
    </ligand>
</feature>
<feature type="binding site" evidence="1">
    <location>
        <position position="144"/>
    </location>
    <ligand>
        <name>[4Fe-4S] cluster</name>
        <dbReference type="ChEBI" id="CHEBI:49883"/>
        <label>3</label>
    </ligand>
</feature>
<feature type="binding site" evidence="1">
    <location>
        <position position="147"/>
    </location>
    <ligand>
        <name>[4Fe-4S] cluster</name>
        <dbReference type="ChEBI" id="CHEBI:49883"/>
        <label>3</label>
    </ligand>
</feature>
<feature type="binding site" evidence="1">
    <location>
        <position position="150"/>
    </location>
    <ligand>
        <name>[4Fe-4S] cluster</name>
        <dbReference type="ChEBI" id="CHEBI:49883"/>
        <label>3</label>
    </ligand>
</feature>
<feature type="binding site" evidence="1">
    <location>
        <position position="154"/>
    </location>
    <ligand>
        <name>[4Fe-4S] cluster</name>
        <dbReference type="ChEBI" id="CHEBI:49883"/>
        <label>2</label>
    </ligand>
</feature>
<comment type="function">
    <text evidence="1">Part of a membrane-bound complex that couples electron transfer with translocation of ions across the membrane.</text>
</comment>
<comment type="cofactor">
    <cofactor evidence="1">
        <name>[4Fe-4S] cluster</name>
        <dbReference type="ChEBI" id="CHEBI:49883"/>
    </cofactor>
    <text evidence="1">Binds 3 [4Fe-4S] clusters.</text>
</comment>
<comment type="subunit">
    <text evidence="1">The complex is composed of six subunits: RnfA, RnfB, RnfC, RnfD, RnfE and RnfG.</text>
</comment>
<comment type="subcellular location">
    <subcellularLocation>
        <location evidence="1">Cell inner membrane</location>
    </subcellularLocation>
</comment>
<comment type="similarity">
    <text evidence="1">Belongs to the 4Fe4S bacterial-type ferredoxin family. RnfB subfamily.</text>
</comment>
<accession>B7VLT8</accession>
<keyword id="KW-0004">4Fe-4S</keyword>
<keyword id="KW-0997">Cell inner membrane</keyword>
<keyword id="KW-1003">Cell membrane</keyword>
<keyword id="KW-0249">Electron transport</keyword>
<keyword id="KW-0408">Iron</keyword>
<keyword id="KW-0411">Iron-sulfur</keyword>
<keyword id="KW-0472">Membrane</keyword>
<keyword id="KW-0479">Metal-binding</keyword>
<keyword id="KW-0677">Repeat</keyword>
<keyword id="KW-1278">Translocase</keyword>
<keyword id="KW-0813">Transport</keyword>
<sequence>MSTILIAIIALAVLAAVFGAILGFASIRFKVEADPIVDQIDTILPQTQCGQCGYPGCRPYAEAIANGDKINKCPPGGQATIEKLADLMGVEVEDSAHDLDNKVKTVAFIHEDMCIGCTKCIQACPVDAIVGGTKALHTVIKDECTGCDLCVAPCPTDCIEMIPVATTTENWKWQMNIIPVTDITNQATDATASEPKA</sequence>